<protein>
    <recommendedName>
        <fullName evidence="1">DNA-directed RNA polymerase subunit beta'</fullName>
        <shortName evidence="1">RNAP subunit beta'</shortName>
        <ecNumber evidence="1">2.7.7.6</ecNumber>
    </recommendedName>
    <alternativeName>
        <fullName evidence="1">RNA polymerase subunit beta'</fullName>
    </alternativeName>
    <alternativeName>
        <fullName evidence="1">Transcriptase subunit beta'</fullName>
    </alternativeName>
</protein>
<name>RPOC_XANC8</name>
<organism>
    <name type="scientific">Xanthomonas campestris pv. campestris (strain 8004)</name>
    <dbReference type="NCBI Taxonomy" id="314565"/>
    <lineage>
        <taxon>Bacteria</taxon>
        <taxon>Pseudomonadati</taxon>
        <taxon>Pseudomonadota</taxon>
        <taxon>Gammaproteobacteria</taxon>
        <taxon>Lysobacterales</taxon>
        <taxon>Lysobacteraceae</taxon>
        <taxon>Xanthomonas</taxon>
    </lineage>
</organism>
<evidence type="ECO:0000255" key="1">
    <source>
        <dbReference type="HAMAP-Rule" id="MF_01322"/>
    </source>
</evidence>
<comment type="function">
    <text evidence="1">DNA-dependent RNA polymerase catalyzes the transcription of DNA into RNA using the four ribonucleoside triphosphates as substrates.</text>
</comment>
<comment type="catalytic activity">
    <reaction evidence="1">
        <text>RNA(n) + a ribonucleoside 5'-triphosphate = RNA(n+1) + diphosphate</text>
        <dbReference type="Rhea" id="RHEA:21248"/>
        <dbReference type="Rhea" id="RHEA-COMP:14527"/>
        <dbReference type="Rhea" id="RHEA-COMP:17342"/>
        <dbReference type="ChEBI" id="CHEBI:33019"/>
        <dbReference type="ChEBI" id="CHEBI:61557"/>
        <dbReference type="ChEBI" id="CHEBI:140395"/>
        <dbReference type="EC" id="2.7.7.6"/>
    </reaction>
</comment>
<comment type="cofactor">
    <cofactor evidence="1">
        <name>Mg(2+)</name>
        <dbReference type="ChEBI" id="CHEBI:18420"/>
    </cofactor>
    <text evidence="1">Binds 1 Mg(2+) ion per subunit.</text>
</comment>
<comment type="cofactor">
    <cofactor evidence="1">
        <name>Zn(2+)</name>
        <dbReference type="ChEBI" id="CHEBI:29105"/>
    </cofactor>
    <text evidence="1">Binds 2 Zn(2+) ions per subunit.</text>
</comment>
<comment type="subunit">
    <text evidence="1">The RNAP catalytic core consists of 2 alpha, 1 beta, 1 beta' and 1 omega subunit. When a sigma factor is associated with the core the holoenzyme is formed, which can initiate transcription.</text>
</comment>
<comment type="similarity">
    <text evidence="1">Belongs to the RNA polymerase beta' chain family.</text>
</comment>
<feature type="chain" id="PRO_0000225586" description="DNA-directed RNA polymerase subunit beta'">
    <location>
        <begin position="1"/>
        <end position="1405"/>
    </location>
</feature>
<feature type="binding site" evidence="1">
    <location>
        <position position="70"/>
    </location>
    <ligand>
        <name>Zn(2+)</name>
        <dbReference type="ChEBI" id="CHEBI:29105"/>
        <label>1</label>
    </ligand>
</feature>
<feature type="binding site" evidence="1">
    <location>
        <position position="72"/>
    </location>
    <ligand>
        <name>Zn(2+)</name>
        <dbReference type="ChEBI" id="CHEBI:29105"/>
        <label>1</label>
    </ligand>
</feature>
<feature type="binding site" evidence="1">
    <location>
        <position position="85"/>
    </location>
    <ligand>
        <name>Zn(2+)</name>
        <dbReference type="ChEBI" id="CHEBI:29105"/>
        <label>1</label>
    </ligand>
</feature>
<feature type="binding site" evidence="1">
    <location>
        <position position="88"/>
    </location>
    <ligand>
        <name>Zn(2+)</name>
        <dbReference type="ChEBI" id="CHEBI:29105"/>
        <label>1</label>
    </ligand>
</feature>
<feature type="binding site" evidence="1">
    <location>
        <position position="460"/>
    </location>
    <ligand>
        <name>Mg(2+)</name>
        <dbReference type="ChEBI" id="CHEBI:18420"/>
    </ligand>
</feature>
<feature type="binding site" evidence="1">
    <location>
        <position position="462"/>
    </location>
    <ligand>
        <name>Mg(2+)</name>
        <dbReference type="ChEBI" id="CHEBI:18420"/>
    </ligand>
</feature>
<feature type="binding site" evidence="1">
    <location>
        <position position="464"/>
    </location>
    <ligand>
        <name>Mg(2+)</name>
        <dbReference type="ChEBI" id="CHEBI:18420"/>
    </ligand>
</feature>
<feature type="binding site" evidence="1">
    <location>
        <position position="815"/>
    </location>
    <ligand>
        <name>Zn(2+)</name>
        <dbReference type="ChEBI" id="CHEBI:29105"/>
        <label>2</label>
    </ligand>
</feature>
<feature type="binding site" evidence="1">
    <location>
        <position position="890"/>
    </location>
    <ligand>
        <name>Zn(2+)</name>
        <dbReference type="ChEBI" id="CHEBI:29105"/>
        <label>2</label>
    </ligand>
</feature>
<feature type="binding site" evidence="1">
    <location>
        <position position="897"/>
    </location>
    <ligand>
        <name>Zn(2+)</name>
        <dbReference type="ChEBI" id="CHEBI:29105"/>
        <label>2</label>
    </ligand>
</feature>
<feature type="binding site" evidence="1">
    <location>
        <position position="900"/>
    </location>
    <ligand>
        <name>Zn(2+)</name>
        <dbReference type="ChEBI" id="CHEBI:29105"/>
        <label>2</label>
    </ligand>
</feature>
<proteinExistence type="inferred from homology"/>
<reference key="1">
    <citation type="journal article" date="2005" name="Genome Res.">
        <title>Comparative and functional genomic analyses of the pathogenicity of phytopathogen Xanthomonas campestris pv. campestris.</title>
        <authorList>
            <person name="Qian W."/>
            <person name="Jia Y."/>
            <person name="Ren S.-X."/>
            <person name="He Y.-Q."/>
            <person name="Feng J.-X."/>
            <person name="Lu L.-F."/>
            <person name="Sun Q."/>
            <person name="Ying G."/>
            <person name="Tang D.-J."/>
            <person name="Tang H."/>
            <person name="Wu W."/>
            <person name="Hao P."/>
            <person name="Wang L."/>
            <person name="Jiang B.-L."/>
            <person name="Zeng S."/>
            <person name="Gu W.-Y."/>
            <person name="Lu G."/>
            <person name="Rong L."/>
            <person name="Tian Y."/>
            <person name="Yao Z."/>
            <person name="Fu G."/>
            <person name="Chen B."/>
            <person name="Fang R."/>
            <person name="Qiang B."/>
            <person name="Chen Z."/>
            <person name="Zhao G.-P."/>
            <person name="Tang J.-L."/>
            <person name="He C."/>
        </authorList>
    </citation>
    <scope>NUCLEOTIDE SEQUENCE [LARGE SCALE GENOMIC DNA]</scope>
    <source>
        <strain>8004</strain>
    </source>
</reference>
<dbReference type="EC" id="2.7.7.6" evidence="1"/>
<dbReference type="EMBL" id="CP000050">
    <property type="protein sequence ID" value="AAY50390.1"/>
    <property type="molecule type" value="Genomic_DNA"/>
</dbReference>
<dbReference type="RefSeq" id="WP_011036119.1">
    <property type="nucleotide sequence ID" value="NZ_CP155948.1"/>
</dbReference>
<dbReference type="SMR" id="Q4URD3"/>
<dbReference type="KEGG" id="xcb:XC_3346"/>
<dbReference type="HOGENOM" id="CLU_000524_3_1_6"/>
<dbReference type="Proteomes" id="UP000000420">
    <property type="component" value="Chromosome"/>
</dbReference>
<dbReference type="GO" id="GO:0000428">
    <property type="term" value="C:DNA-directed RNA polymerase complex"/>
    <property type="evidence" value="ECO:0007669"/>
    <property type="project" value="UniProtKB-KW"/>
</dbReference>
<dbReference type="GO" id="GO:0003677">
    <property type="term" value="F:DNA binding"/>
    <property type="evidence" value="ECO:0007669"/>
    <property type="project" value="UniProtKB-UniRule"/>
</dbReference>
<dbReference type="GO" id="GO:0003899">
    <property type="term" value="F:DNA-directed RNA polymerase activity"/>
    <property type="evidence" value="ECO:0007669"/>
    <property type="project" value="UniProtKB-UniRule"/>
</dbReference>
<dbReference type="GO" id="GO:0000287">
    <property type="term" value="F:magnesium ion binding"/>
    <property type="evidence" value="ECO:0007669"/>
    <property type="project" value="UniProtKB-UniRule"/>
</dbReference>
<dbReference type="GO" id="GO:0008270">
    <property type="term" value="F:zinc ion binding"/>
    <property type="evidence" value="ECO:0007669"/>
    <property type="project" value="UniProtKB-UniRule"/>
</dbReference>
<dbReference type="GO" id="GO:0006351">
    <property type="term" value="P:DNA-templated transcription"/>
    <property type="evidence" value="ECO:0007669"/>
    <property type="project" value="UniProtKB-UniRule"/>
</dbReference>
<dbReference type="CDD" id="cd02655">
    <property type="entry name" value="RNAP_beta'_C"/>
    <property type="match status" value="1"/>
</dbReference>
<dbReference type="CDD" id="cd01609">
    <property type="entry name" value="RNAP_beta'_N"/>
    <property type="match status" value="1"/>
</dbReference>
<dbReference type="FunFam" id="1.10.132.30:FF:000003">
    <property type="entry name" value="DNA-directed RNA polymerase subunit beta"/>
    <property type="match status" value="1"/>
</dbReference>
<dbReference type="FunFam" id="1.10.150.390:FF:000002">
    <property type="entry name" value="DNA-directed RNA polymerase subunit beta"/>
    <property type="match status" value="1"/>
</dbReference>
<dbReference type="Gene3D" id="1.10.132.30">
    <property type="match status" value="1"/>
</dbReference>
<dbReference type="Gene3D" id="1.10.150.390">
    <property type="match status" value="1"/>
</dbReference>
<dbReference type="Gene3D" id="1.10.1790.20">
    <property type="match status" value="1"/>
</dbReference>
<dbReference type="Gene3D" id="1.10.40.90">
    <property type="match status" value="1"/>
</dbReference>
<dbReference type="Gene3D" id="2.40.40.20">
    <property type="match status" value="1"/>
</dbReference>
<dbReference type="Gene3D" id="2.40.50.100">
    <property type="match status" value="3"/>
</dbReference>
<dbReference type="Gene3D" id="4.10.860.120">
    <property type="entry name" value="RNA polymerase II, clamp domain"/>
    <property type="match status" value="1"/>
</dbReference>
<dbReference type="Gene3D" id="1.10.274.100">
    <property type="entry name" value="RNA polymerase Rpb1, domain 3"/>
    <property type="match status" value="2"/>
</dbReference>
<dbReference type="HAMAP" id="MF_01322">
    <property type="entry name" value="RNApol_bact_RpoC"/>
    <property type="match status" value="1"/>
</dbReference>
<dbReference type="InterPro" id="IPR045867">
    <property type="entry name" value="DNA-dir_RpoC_beta_prime"/>
</dbReference>
<dbReference type="InterPro" id="IPR012754">
    <property type="entry name" value="DNA-dir_RpoC_beta_prime_bact"/>
</dbReference>
<dbReference type="InterPro" id="IPR000722">
    <property type="entry name" value="RNA_pol_asu"/>
</dbReference>
<dbReference type="InterPro" id="IPR006592">
    <property type="entry name" value="RNA_pol_N"/>
</dbReference>
<dbReference type="InterPro" id="IPR007080">
    <property type="entry name" value="RNA_pol_Rpb1_1"/>
</dbReference>
<dbReference type="InterPro" id="IPR007066">
    <property type="entry name" value="RNA_pol_Rpb1_3"/>
</dbReference>
<dbReference type="InterPro" id="IPR042102">
    <property type="entry name" value="RNA_pol_Rpb1_3_sf"/>
</dbReference>
<dbReference type="InterPro" id="IPR007083">
    <property type="entry name" value="RNA_pol_Rpb1_4"/>
</dbReference>
<dbReference type="InterPro" id="IPR007081">
    <property type="entry name" value="RNA_pol_Rpb1_5"/>
</dbReference>
<dbReference type="InterPro" id="IPR044893">
    <property type="entry name" value="RNA_pol_Rpb1_clamp_domain"/>
</dbReference>
<dbReference type="InterPro" id="IPR038120">
    <property type="entry name" value="Rpb1_funnel_sf"/>
</dbReference>
<dbReference type="NCBIfam" id="TIGR02386">
    <property type="entry name" value="rpoC_TIGR"/>
    <property type="match status" value="1"/>
</dbReference>
<dbReference type="PANTHER" id="PTHR19376">
    <property type="entry name" value="DNA-DIRECTED RNA POLYMERASE"/>
    <property type="match status" value="1"/>
</dbReference>
<dbReference type="PANTHER" id="PTHR19376:SF54">
    <property type="entry name" value="DNA-DIRECTED RNA POLYMERASE SUBUNIT BETA"/>
    <property type="match status" value="1"/>
</dbReference>
<dbReference type="Pfam" id="PF04997">
    <property type="entry name" value="RNA_pol_Rpb1_1"/>
    <property type="match status" value="1"/>
</dbReference>
<dbReference type="Pfam" id="PF00623">
    <property type="entry name" value="RNA_pol_Rpb1_2"/>
    <property type="match status" value="2"/>
</dbReference>
<dbReference type="Pfam" id="PF04983">
    <property type="entry name" value="RNA_pol_Rpb1_3"/>
    <property type="match status" value="1"/>
</dbReference>
<dbReference type="Pfam" id="PF05000">
    <property type="entry name" value="RNA_pol_Rpb1_4"/>
    <property type="match status" value="1"/>
</dbReference>
<dbReference type="Pfam" id="PF04998">
    <property type="entry name" value="RNA_pol_Rpb1_5"/>
    <property type="match status" value="1"/>
</dbReference>
<dbReference type="SMART" id="SM00663">
    <property type="entry name" value="RPOLA_N"/>
    <property type="match status" value="1"/>
</dbReference>
<dbReference type="SUPFAM" id="SSF64484">
    <property type="entry name" value="beta and beta-prime subunits of DNA dependent RNA-polymerase"/>
    <property type="match status" value="1"/>
</dbReference>
<sequence length="1405" mass="155282">MKDLLNLFNQQRQTLDFDAIKIALASPDLIRSWSYGEVKKPETINYRTFKPERDGLFCAAIFGPIKDYECLCGKYKRMKHRGVVCEKCGTEVTLAKVRRERMGHIDLASPVAHIWFLKSLPSRIGLMLDMTLRDIERVLYFEAYVVTEPGLTPLERRQLLTEEQYLTARQEYNDDFDAAMGAEAVYELLRTIDLQSEMTRLREEIASTGSETKLKRLTKRIKLIEAFLESGNRPEWMVMTVLPVLPPDLRPLVPLDGGRFATSDLNDLYRRVINRNNRLRRLLELNAPDIIVRNEKRMLQESVDALLDNGRRGRAITGTNKRPLKSLADMIKGKQGRFRQNLLGKRVDYSGRSVITVGPYLKLHQCGLPKKMALELFKPFVFAKLQRRGLATTIKAAKKLVEREEAEVWDILEEVIREHPVLLNRAPTLHRLGIQAFEPVLIEGKAIQLHPLVCTAFNADFDGDQMAVHVPLSLEAQLEARALMMSTNNILSPANGEPIIVPSQDVVLGLYYMSRALENKKGEGMVFANTSEVKRAYDNRVVELHAKVKVRITQVDVDTVDGKRTSGTSIVDTTVGRALLSEILPEGLPFQLANTEMTKKNISRLINSSYRLLGLKDTVVFADKLMYTGYAYATRAGVSIGIDDMLIPDEKKGILTEAEAEVLEIQEQYQSGLVTAGERYNKVVDIWSRTSERIAKAMMDTIGTEKVENAKGETIDQKSMNSLYIMADSGARGSQAQIRQLAGMRGLMARPDGSIIETPIKANFREGLNVQEYFNSTHGARKGLADTALKTANSGYLTRRLVDVAQDVVITEVDCGTTEGLIMTPIVEGGDVVEPLKERVLGRVVAEDVYLPGNDEEPIVTRNTLLDEAWVAKLEDASVQSVKVRSTISCESSFGVCARCYGRDLARGHQVNIGEAVGVIAAQSIGEPGTQLTMRTFHIGGAASRAAAVDNITVKTTGSVKFNNLKSVAHASGALVAVSRSGELSVLDGHGRERERYKLPYGATITAKDGDAVKAGQAVANWDPHNHPIVSEVAGFIRFIDFVDGVTVIEKTDELTGLASREITDPKRRGAQAKELRPIVRIVDAKGNDLTIPNTDLPAQYLLPPRSIVNLQDGAAVGVGDVVAKIPQEASKTRDITGGLPRVADLFEARKPKDPAILAERSGIISFGKDTKGKQRLIIKDTDGSEHEELIPKYRQIIVFEGEHVTKGETVVDGEPSPQDILRLLGVEPLAAYLVKEIQDVYRLQGVKINDKHIEVITRQMLRKVEITDQGNSKFLNGEQVERQRVIEENARLVTRNELPAKYDPVLLGITKASLATESFISAASFQETTRVLTEAAVRGTRDNLRGLKENVIVGRLIPAGTGLAYHAGRRKASGLTDSEMETLSGKPAVVEPVATVADAGADEE</sequence>
<gene>
    <name evidence="1" type="primary">rpoC</name>
    <name type="ordered locus">XC_3346</name>
</gene>
<accession>Q4URD3</accession>
<keyword id="KW-0240">DNA-directed RNA polymerase</keyword>
<keyword id="KW-0460">Magnesium</keyword>
<keyword id="KW-0479">Metal-binding</keyword>
<keyword id="KW-0548">Nucleotidyltransferase</keyword>
<keyword id="KW-0804">Transcription</keyword>
<keyword id="KW-0808">Transferase</keyword>
<keyword id="KW-0862">Zinc</keyword>